<protein>
    <recommendedName>
        <fullName>VIP36-like protein</fullName>
    </recommendedName>
    <alternativeName>
        <fullName>Lectin mannose-binding 2-like</fullName>
        <shortName>LMAN2-like protein</shortName>
    </alternativeName>
</protein>
<evidence type="ECO:0000255" key="1"/>
<evidence type="ECO:0000255" key="2">
    <source>
        <dbReference type="PROSITE-ProRule" id="PRU00658"/>
    </source>
</evidence>
<evidence type="ECO:0000269" key="3">
    <source>
    </source>
</evidence>
<evidence type="ECO:0000269" key="4">
    <source>
    </source>
</evidence>
<evidence type="ECO:0000269" key="5">
    <source>
    </source>
</evidence>
<evidence type="ECO:0000269" key="6">
    <source>
    </source>
</evidence>
<evidence type="ECO:0000303" key="7">
    <source>
    </source>
</evidence>
<evidence type="ECO:0000303" key="8">
    <source>
    </source>
</evidence>
<evidence type="ECO:0000305" key="9"/>
<gene>
    <name type="primary">LMAN2L</name>
    <name type="synonym">VIPL</name>
    <name type="ORF">PSEC0028</name>
    <name type="ORF">UNQ368/PRO704</name>
</gene>
<name>LMA2L_HUMAN</name>
<organism>
    <name type="scientific">Homo sapiens</name>
    <name type="common">Human</name>
    <dbReference type="NCBI Taxonomy" id="9606"/>
    <lineage>
        <taxon>Eukaryota</taxon>
        <taxon>Metazoa</taxon>
        <taxon>Chordata</taxon>
        <taxon>Craniata</taxon>
        <taxon>Vertebrata</taxon>
        <taxon>Euteleostomi</taxon>
        <taxon>Mammalia</taxon>
        <taxon>Eutheria</taxon>
        <taxon>Euarchontoglires</taxon>
        <taxon>Primates</taxon>
        <taxon>Haplorrhini</taxon>
        <taxon>Catarrhini</taxon>
        <taxon>Hominidae</taxon>
        <taxon>Homo</taxon>
    </lineage>
</organism>
<dbReference type="EMBL" id="AJ549957">
    <property type="protein sequence ID" value="CAD71268.1"/>
    <property type="molecule type" value="mRNA"/>
</dbReference>
<dbReference type="EMBL" id="AL136617">
    <property type="protein sequence ID" value="CAB66552.1"/>
    <property type="molecule type" value="mRNA"/>
</dbReference>
<dbReference type="EMBL" id="AY358929">
    <property type="protein sequence ID" value="AAQ89288.1"/>
    <property type="molecule type" value="mRNA"/>
</dbReference>
<dbReference type="EMBL" id="AK299740">
    <property type="protein sequence ID" value="BAG61635.1"/>
    <property type="molecule type" value="mRNA"/>
</dbReference>
<dbReference type="EMBL" id="AK222828">
    <property type="protein sequence ID" value="BAD96548.1"/>
    <property type="molecule type" value="mRNA"/>
</dbReference>
<dbReference type="EMBL" id="AK075347">
    <property type="protein sequence ID" value="BAC11559.1"/>
    <property type="molecule type" value="mRNA"/>
</dbReference>
<dbReference type="EMBL" id="BX648002">
    <property type="protein sequence ID" value="CAH56196.1"/>
    <property type="molecule type" value="mRNA"/>
</dbReference>
<dbReference type="EMBL" id="AC068539">
    <property type="protein sequence ID" value="AAX93211.1"/>
    <property type="molecule type" value="Genomic_DNA"/>
</dbReference>
<dbReference type="EMBL" id="CH471207">
    <property type="protein sequence ID" value="EAW71341.1"/>
    <property type="molecule type" value="Genomic_DNA"/>
</dbReference>
<dbReference type="EMBL" id="CH471207">
    <property type="protein sequence ID" value="EAW71343.1"/>
    <property type="molecule type" value="Genomic_DNA"/>
</dbReference>
<dbReference type="EMBL" id="BC000347">
    <property type="protein sequence ID" value="AAH00347.2"/>
    <property type="molecule type" value="mRNA"/>
</dbReference>
<dbReference type="EMBL" id="BC005822">
    <property type="protein sequence ID" value="AAH05822.2"/>
    <property type="molecule type" value="mRNA"/>
</dbReference>
<dbReference type="EMBL" id="BC005862">
    <property type="protein sequence ID" value="AAH05862.2"/>
    <property type="molecule type" value="mRNA"/>
</dbReference>
<dbReference type="EMBL" id="BC067265">
    <property type="protein sequence ID" value="AAH67265.1"/>
    <property type="molecule type" value="mRNA"/>
</dbReference>
<dbReference type="CCDS" id="CCDS2023.1">
    <molecule id="Q9H0V9-1"/>
</dbReference>
<dbReference type="CCDS" id="CCDS46365.1">
    <molecule id="Q9H0V9-2"/>
</dbReference>
<dbReference type="RefSeq" id="NP_001135764.1">
    <molecule id="Q9H0V9-2"/>
    <property type="nucleotide sequence ID" value="NM_001142292.2"/>
</dbReference>
<dbReference type="RefSeq" id="NP_001309275.1">
    <molecule id="Q9H0V9-3"/>
    <property type="nucleotide sequence ID" value="NM_001322346.2"/>
</dbReference>
<dbReference type="RefSeq" id="NP_001309276.1">
    <property type="nucleotide sequence ID" value="NM_001322347.1"/>
</dbReference>
<dbReference type="RefSeq" id="NP_001309279.1">
    <property type="nucleotide sequence ID" value="NM_001322350.1"/>
</dbReference>
<dbReference type="RefSeq" id="NP_001309280.1">
    <property type="nucleotide sequence ID" value="NM_001322351.1"/>
</dbReference>
<dbReference type="RefSeq" id="NP_001309283.1">
    <molecule id="Q9H0V9-3"/>
    <property type="nucleotide sequence ID" value="NM_001322354.2"/>
</dbReference>
<dbReference type="RefSeq" id="NP_110432.1">
    <molecule id="Q9H0V9-1"/>
    <property type="nucleotide sequence ID" value="NM_030805.4"/>
</dbReference>
<dbReference type="SMR" id="Q9H0V9"/>
<dbReference type="BioGRID" id="123525">
    <property type="interactions" value="142"/>
</dbReference>
<dbReference type="FunCoup" id="Q9H0V9">
    <property type="interactions" value="1838"/>
</dbReference>
<dbReference type="IntAct" id="Q9H0V9">
    <property type="interactions" value="91"/>
</dbReference>
<dbReference type="MINT" id="Q9H0V9"/>
<dbReference type="STRING" id="9606.ENSP00000366280"/>
<dbReference type="GlyCosmos" id="Q9H0V9">
    <property type="glycosylation" value="2 sites, 1 glycan"/>
</dbReference>
<dbReference type="GlyGen" id="Q9H0V9">
    <property type="glycosylation" value="3 sites, 9 N-linked glycans (1 site), 1 O-linked glycan (1 site)"/>
</dbReference>
<dbReference type="iPTMnet" id="Q9H0V9"/>
<dbReference type="PhosphoSitePlus" id="Q9H0V9"/>
<dbReference type="SwissPalm" id="Q9H0V9"/>
<dbReference type="BioMuta" id="LMAN2L"/>
<dbReference type="DMDM" id="29611906"/>
<dbReference type="jPOST" id="Q9H0V9"/>
<dbReference type="MassIVE" id="Q9H0V9"/>
<dbReference type="PaxDb" id="9606-ENSP00000366280"/>
<dbReference type="PeptideAtlas" id="Q9H0V9"/>
<dbReference type="ProteomicsDB" id="5026"/>
<dbReference type="ProteomicsDB" id="80329">
    <molecule id="Q9H0V9-1"/>
</dbReference>
<dbReference type="ProteomicsDB" id="80330">
    <molecule id="Q9H0V9-2"/>
</dbReference>
<dbReference type="Pumba" id="Q9H0V9"/>
<dbReference type="TopDownProteomics" id="Q9H0V9-1">
    <molecule id="Q9H0V9-1"/>
</dbReference>
<dbReference type="TopDownProteomics" id="Q9H0V9-2">
    <molecule id="Q9H0V9-2"/>
</dbReference>
<dbReference type="Antibodypedia" id="17473">
    <property type="antibodies" value="59 antibodies from 18 providers"/>
</dbReference>
<dbReference type="DNASU" id="81562"/>
<dbReference type="Ensembl" id="ENST00000264963.9">
    <molecule id="Q9H0V9-1"/>
    <property type="protein sequence ID" value="ENSP00000264963.4"/>
    <property type="gene ID" value="ENSG00000114988.12"/>
</dbReference>
<dbReference type="Ensembl" id="ENST00000377079.8">
    <molecule id="Q9H0V9-2"/>
    <property type="protein sequence ID" value="ENSP00000366280.4"/>
    <property type="gene ID" value="ENSG00000114988.12"/>
</dbReference>
<dbReference type="GeneID" id="81562"/>
<dbReference type="KEGG" id="hsa:81562"/>
<dbReference type="MANE-Select" id="ENST00000264963.9">
    <property type="protein sequence ID" value="ENSP00000264963.4"/>
    <property type="RefSeq nucleotide sequence ID" value="NM_030805.4"/>
    <property type="RefSeq protein sequence ID" value="NP_110432.1"/>
</dbReference>
<dbReference type="UCSC" id="uc002swu.4">
    <molecule id="Q9H0V9-1"/>
    <property type="organism name" value="human"/>
</dbReference>
<dbReference type="AGR" id="HGNC:19263"/>
<dbReference type="CTD" id="81562"/>
<dbReference type="DisGeNET" id="81562"/>
<dbReference type="GeneCards" id="LMAN2L"/>
<dbReference type="HGNC" id="HGNC:19263">
    <property type="gene designation" value="LMAN2L"/>
</dbReference>
<dbReference type="HPA" id="ENSG00000114988">
    <property type="expression patterns" value="Low tissue specificity"/>
</dbReference>
<dbReference type="MalaCards" id="LMAN2L"/>
<dbReference type="MIM" id="609552">
    <property type="type" value="gene"/>
</dbReference>
<dbReference type="MIM" id="616887">
    <property type="type" value="phenotype"/>
</dbReference>
<dbReference type="MIM" id="617863">
    <property type="type" value="phenotype"/>
</dbReference>
<dbReference type="neXtProt" id="NX_Q9H0V9"/>
<dbReference type="OpenTargets" id="ENSG00000114988"/>
<dbReference type="Orphanet" id="88616">
    <property type="disease" value="Autosomal recessive non-syndromic intellectual disability"/>
</dbReference>
<dbReference type="PharmGKB" id="PA134937652"/>
<dbReference type="VEuPathDB" id="HostDB:ENSG00000114988"/>
<dbReference type="eggNOG" id="KOG3839">
    <property type="taxonomic scope" value="Eukaryota"/>
</dbReference>
<dbReference type="GeneTree" id="ENSGT00940000155596"/>
<dbReference type="HOGENOM" id="CLU_041093_0_0_1"/>
<dbReference type="InParanoid" id="Q9H0V9"/>
<dbReference type="OMA" id="GCSIDYR"/>
<dbReference type="OrthoDB" id="270293at2759"/>
<dbReference type="PAN-GO" id="Q9H0V9">
    <property type="GO annotations" value="8 GO annotations based on evolutionary models"/>
</dbReference>
<dbReference type="PhylomeDB" id="Q9H0V9"/>
<dbReference type="TreeFam" id="TF313311"/>
<dbReference type="PathwayCommons" id="Q9H0V9"/>
<dbReference type="Reactome" id="R-HSA-204005">
    <property type="pathway name" value="COPII-mediated vesicle transport"/>
</dbReference>
<dbReference type="Reactome" id="R-HSA-5694530">
    <property type="pathway name" value="Cargo concentration in the ER"/>
</dbReference>
<dbReference type="SignaLink" id="Q9H0V9"/>
<dbReference type="BioGRID-ORCS" id="81562">
    <property type="hits" value="19 hits in 1155 CRISPR screens"/>
</dbReference>
<dbReference type="ChiTaRS" id="LMAN2L">
    <property type="organism name" value="human"/>
</dbReference>
<dbReference type="GeneWiki" id="LMAN2L"/>
<dbReference type="GenomeRNAi" id="81562"/>
<dbReference type="Pharos" id="Q9H0V9">
    <property type="development level" value="Tbio"/>
</dbReference>
<dbReference type="PRO" id="PR:Q9H0V9"/>
<dbReference type="Proteomes" id="UP000005640">
    <property type="component" value="Chromosome 2"/>
</dbReference>
<dbReference type="RNAct" id="Q9H0V9">
    <property type="molecule type" value="protein"/>
</dbReference>
<dbReference type="Bgee" id="ENSG00000114988">
    <property type="expression patterns" value="Expressed in islet of Langerhans and 190 other cell types or tissues"/>
</dbReference>
<dbReference type="ExpressionAtlas" id="Q9H0V9">
    <property type="expression patterns" value="baseline and differential"/>
</dbReference>
<dbReference type="GO" id="GO:0030134">
    <property type="term" value="C:COPII-coated ER to Golgi transport vesicle"/>
    <property type="evidence" value="ECO:0000318"/>
    <property type="project" value="GO_Central"/>
</dbReference>
<dbReference type="GO" id="GO:0005789">
    <property type="term" value="C:endoplasmic reticulum membrane"/>
    <property type="evidence" value="ECO:0000314"/>
    <property type="project" value="UniProtKB"/>
</dbReference>
<dbReference type="GO" id="GO:0005793">
    <property type="term" value="C:endoplasmic reticulum-Golgi intermediate compartment"/>
    <property type="evidence" value="ECO:0000318"/>
    <property type="project" value="GO_Central"/>
</dbReference>
<dbReference type="GO" id="GO:0005794">
    <property type="term" value="C:Golgi apparatus"/>
    <property type="evidence" value="ECO:0000314"/>
    <property type="project" value="UniProtKB"/>
</dbReference>
<dbReference type="GO" id="GO:0000139">
    <property type="term" value="C:Golgi membrane"/>
    <property type="evidence" value="ECO:0000318"/>
    <property type="project" value="GO_Central"/>
</dbReference>
<dbReference type="GO" id="GO:0016020">
    <property type="term" value="C:membrane"/>
    <property type="evidence" value="ECO:0000304"/>
    <property type="project" value="UniProtKB"/>
</dbReference>
<dbReference type="GO" id="GO:0005537">
    <property type="term" value="F:D-mannose binding"/>
    <property type="evidence" value="ECO:0000318"/>
    <property type="project" value="GO_Central"/>
</dbReference>
<dbReference type="GO" id="GO:0046872">
    <property type="term" value="F:metal ion binding"/>
    <property type="evidence" value="ECO:0007669"/>
    <property type="project" value="UniProtKB-KW"/>
</dbReference>
<dbReference type="GO" id="GO:0006888">
    <property type="term" value="P:endoplasmic reticulum to Golgi vesicle-mediated transport"/>
    <property type="evidence" value="ECO:0000318"/>
    <property type="project" value="GO_Central"/>
</dbReference>
<dbReference type="GO" id="GO:0006457">
    <property type="term" value="P:protein folding"/>
    <property type="evidence" value="ECO:0000303"/>
    <property type="project" value="UniProtKB"/>
</dbReference>
<dbReference type="GO" id="GO:0015031">
    <property type="term" value="P:protein transport"/>
    <property type="evidence" value="ECO:0000315"/>
    <property type="project" value="UniProtKB"/>
</dbReference>
<dbReference type="FunFam" id="2.60.120.200:FF:000017">
    <property type="entry name" value="Vesicular integral-membrane protein VIP36"/>
    <property type="match status" value="1"/>
</dbReference>
<dbReference type="Gene3D" id="2.60.120.200">
    <property type="match status" value="1"/>
</dbReference>
<dbReference type="InterPro" id="IPR013320">
    <property type="entry name" value="ConA-like_dom_sf"/>
</dbReference>
<dbReference type="InterPro" id="IPR051136">
    <property type="entry name" value="Intracellular_Lectin-GPT"/>
</dbReference>
<dbReference type="InterPro" id="IPR005052">
    <property type="entry name" value="Lectin_leg"/>
</dbReference>
<dbReference type="PANTHER" id="PTHR12223">
    <property type="entry name" value="VESICULAR MANNOSE-BINDING LECTIN"/>
    <property type="match status" value="1"/>
</dbReference>
<dbReference type="PANTHER" id="PTHR12223:SF20">
    <property type="entry name" value="VIP36-LIKE PROTEIN"/>
    <property type="match status" value="1"/>
</dbReference>
<dbReference type="Pfam" id="PF03388">
    <property type="entry name" value="Lectin_leg-like"/>
    <property type="match status" value="1"/>
</dbReference>
<dbReference type="SUPFAM" id="SSF49899">
    <property type="entry name" value="Concanavalin A-like lectins/glucanases"/>
    <property type="match status" value="1"/>
</dbReference>
<dbReference type="PROSITE" id="PS51328">
    <property type="entry name" value="L_LECTIN_LIKE"/>
    <property type="match status" value="1"/>
</dbReference>
<sequence>MAATLGPLGSWQQWRRCLSARDGSRMLLLLLLLGSGQGPQQVGAGQTFEYLKREHSLSKPYQGVGTGSSSLWNLMGNAMVMTQYIRLTPDMQSKQGALWNRVPCFLRDWELQVHFKIHGQGKKNLHGDGLAIWYTKDRMQPGPVFGNMDKFVGLGVFVDTYPNEEKQQERVFPYISAMVNNGSLSYDHERDGRPTELGGCTAIVRNLHYDTFLVIRYVKRHLTIMMDIDGKHEWRDCIEVPGVRLPRGYYFGTSSITGDLSDNHDVISLKLFELTVERTPEEEKLHRDVFLPSVDNMKLPEMTAPLPPLSGLALFLIVFFSLVFSVFAIVIGIILYNKWQEQSRKRFY</sequence>
<comment type="function">
    <text evidence="4">May be involved in the regulation of export from the endoplasmic reticulum of a subset of glycoproteins. May function as a regulator of ERGIC-53.</text>
</comment>
<comment type="interaction">
    <interactant intactId="EBI-9091707">
        <id>Q9H0V9</id>
    </interactant>
    <interactant intactId="EBI-466029">
        <id>P42858</id>
        <label>HTT</label>
    </interactant>
    <organismsDiffer>false</organismsDiffer>
    <experiments>3</experiments>
</comment>
<comment type="interaction">
    <interactant intactId="EBI-9091707">
        <id>Q9H0V9</id>
    </interactant>
    <interactant intactId="EBI-3932027">
        <id>P21145</id>
        <label>MAL</label>
    </interactant>
    <organismsDiffer>false</organismsDiffer>
    <experiments>3</experiments>
</comment>
<comment type="subcellular location">
    <subcellularLocation>
        <location>Endoplasmic reticulum membrane</location>
        <topology>Single-pass type I membrane protein</topology>
    </subcellularLocation>
    <subcellularLocation>
        <location>Golgi apparatus membrane</location>
        <topology>Single-pass type I membrane protein</topology>
    </subcellularLocation>
    <text>Predominantly found in the endoplasmic reticulum. Partly found in the Golgi.</text>
</comment>
<comment type="alternative products">
    <event type="alternative splicing"/>
    <isoform>
        <id>Q9H0V9-1</id>
        <name>1</name>
        <sequence type="displayed"/>
    </isoform>
    <isoform>
        <id>Q9H0V9-2</id>
        <name>2</name>
        <sequence type="described" ref="VSP_017940"/>
    </isoform>
    <isoform>
        <id>Q9H0V9-3</id>
        <name>3</name>
        <sequence type="described" ref="VSP_054439 VSP_054440"/>
    </isoform>
</comment>
<comment type="tissue specificity">
    <text evidence="4">Expressed in numerous tissues. Highest expression in skeletal muscle and kidney, intermediate levels in heart, liver and placenta, low levels in brain, thymus, spleen, small intestine and lung.</text>
</comment>
<comment type="disease" evidence="5">
    <disease id="DI-04697">
        <name>Intellectual developmental disorder, autosomal recessive 52</name>
        <acronym>MRT52</acronym>
        <description>A disorder characterized by significantly below average general intellectual functioning associated with impairments in adaptive behavior and manifested during the developmental period. MRT52 clinical features include global developmental delay, severe intellectual disability with poor speech, and mild seizures in early childhood.</description>
        <dbReference type="MIM" id="616887"/>
    </disease>
    <text>The disease is caused by variants affecting the gene represented in this entry.</text>
</comment>
<comment type="disease" evidence="6">
    <disease id="DI-06461">
        <name>Intellectual developmental disorder, autosomal dominant 69</name>
        <acronym>MRD69</acronym>
        <description>An autosomal dominant disorder characterized by developmental delay and variably impaired intellectual development. Additional features may include intention tremor in infancy and seizures in childhood, with remission of these in adolescence.</description>
        <dbReference type="MIM" id="617863"/>
    </disease>
    <text>The disease is caused by variants affecting the gene represented in this entry.</text>
</comment>
<feature type="signal peptide" evidence="1">
    <location>
        <begin position="1"/>
        <end position="44"/>
    </location>
</feature>
<feature type="chain" id="PRO_0000017668" description="VIP36-like protein">
    <location>
        <begin position="45"/>
        <end position="348"/>
    </location>
</feature>
<feature type="topological domain" description="Lumenal" evidence="1">
    <location>
        <begin position="45"/>
        <end position="313"/>
    </location>
</feature>
<feature type="transmembrane region" description="Helical" evidence="1">
    <location>
        <begin position="314"/>
        <end position="336"/>
    </location>
</feature>
<feature type="topological domain" description="Cytoplasmic" evidence="1">
    <location>
        <begin position="337"/>
        <end position="348"/>
    </location>
</feature>
<feature type="domain" description="L-type lectin-like" evidence="2">
    <location>
        <begin position="49"/>
        <end position="274"/>
    </location>
</feature>
<feature type="short sequence motif" description="Endoplasmic reticulum retention signal">
    <location>
        <begin position="344"/>
        <end position="346"/>
    </location>
</feature>
<feature type="binding site" evidence="2">
    <location>
        <position position="93"/>
    </location>
    <ligand>
        <name>a carbohydrate</name>
        <dbReference type="ChEBI" id="CHEBI:16646"/>
    </ligand>
</feature>
<feature type="binding site" evidence="2">
    <location>
        <position position="128"/>
    </location>
    <ligand>
        <name>a carbohydrate</name>
        <dbReference type="ChEBI" id="CHEBI:16646"/>
    </ligand>
</feature>
<feature type="binding site" evidence="2">
    <location>
        <position position="159"/>
    </location>
    <ligand>
        <name>Ca(2+)</name>
        <dbReference type="ChEBI" id="CHEBI:29108"/>
    </ligand>
</feature>
<feature type="binding site" evidence="2">
    <location>
        <begin position="161"/>
        <end position="163"/>
    </location>
    <ligand>
        <name>a carbohydrate</name>
        <dbReference type="ChEBI" id="CHEBI:16646"/>
    </ligand>
</feature>
<feature type="binding site" evidence="2">
    <location>
        <position position="161"/>
    </location>
    <ligand>
        <name>Ca(2+)</name>
        <dbReference type="ChEBI" id="CHEBI:29108"/>
    </ligand>
</feature>
<feature type="binding site" evidence="2">
    <location>
        <position position="163"/>
    </location>
    <ligand>
        <name>Ca(2+)</name>
        <dbReference type="ChEBI" id="CHEBI:29108"/>
    </ligand>
</feature>
<feature type="binding site" evidence="2">
    <location>
        <position position="188"/>
    </location>
    <ligand>
        <name>a carbohydrate</name>
        <dbReference type="ChEBI" id="CHEBI:16646"/>
    </ligand>
</feature>
<feature type="binding site" evidence="2">
    <location>
        <position position="191"/>
    </location>
    <ligand>
        <name>Ca(2+)</name>
        <dbReference type="ChEBI" id="CHEBI:29108"/>
    </ligand>
</feature>
<feature type="binding site" evidence="2">
    <location>
        <begin position="258"/>
        <end position="260"/>
    </location>
    <ligand>
        <name>a carbohydrate</name>
        <dbReference type="ChEBI" id="CHEBI:16646"/>
    </ligand>
</feature>
<feature type="glycosylation site" description="N-linked (GlcNAc...) (high mannose) asparagine" evidence="4">
    <location>
        <position position="181"/>
    </location>
</feature>
<feature type="disulfide bond" evidence="2">
    <location>
        <begin position="200"/>
        <end position="237"/>
    </location>
</feature>
<feature type="splice variant" id="VSP_054439" description="In isoform 3." evidence="7">
    <original>MAATLGPLGSWQQWRRCLSARDGSRMLLLLLLLGS</original>
    <variation>MDKERRICMGMAWQSGTQRIGCSQAQKRRYSPGVQ</variation>
    <location>
        <begin position="1"/>
        <end position="35"/>
    </location>
</feature>
<feature type="splice variant" id="VSP_054440" description="In isoform 3." evidence="7">
    <location>
        <begin position="36"/>
        <end position="169"/>
    </location>
</feature>
<feature type="splice variant" id="VSP_017940" description="In isoform 2." evidence="8">
    <original>E</original>
    <variation>EAQKRRYSPGVQ</variation>
    <location>
        <position position="169"/>
    </location>
</feature>
<feature type="sequence variant" id="VAR_076429" description="In MRT52; no effect on general protein glycosylation; dbSNP:rs869320632." evidence="5">
    <original>R</original>
    <variation>Q</variation>
    <location>
        <position position="53"/>
    </location>
</feature>
<feature type="mutagenesis site" description="Loss of ER retention." evidence="3">
    <original>RKR</original>
    <variation>SSS</variation>
    <location>
        <begin position="344"/>
        <end position="346"/>
    </location>
</feature>
<feature type="sequence conflict" description="In Ref. 6; BAC11559." evidence="9" ref="6">
    <original>T</original>
    <variation>A</variation>
    <location>
        <position position="4"/>
    </location>
</feature>
<feature type="sequence conflict" description="In Ref. 5; BAD96548." evidence="9" ref="5">
    <original>S</original>
    <variation>P</variation>
    <location>
        <position position="69"/>
    </location>
</feature>
<feature type="sequence conflict" description="In Ref. 6; BAC11559." evidence="9" ref="6">
    <original>D</original>
    <variation>G</variation>
    <location>
        <position position="288"/>
    </location>
</feature>
<feature type="sequence conflict" description="In Ref. 5; BAD96548." evidence="9" ref="5">
    <original>K</original>
    <variation>R</variation>
    <location>
        <position position="345"/>
    </location>
</feature>
<reference key="1">
    <citation type="journal article" date="2003" name="J. Biol. Chem.">
        <title>Profile-based data base scanning for animal L-type lectins and characterization of VIPL, a novel VIP36-like endoplasmic reticulum protein.</title>
        <authorList>
            <person name="Nufer O."/>
            <person name="Mitrovic S."/>
            <person name="Hauri H.-P."/>
        </authorList>
    </citation>
    <scope>NUCLEOTIDE SEQUENCE [MRNA] (ISOFORM 1)</scope>
    <scope>CHARACTERIZATION</scope>
    <scope>STRUCTURE OF CARBOHYDRATES</scope>
    <scope>SUBCELLULAR LOCATION</scope>
    <scope>MUTAGENESIS OF 344-ARG--ARG-346</scope>
    <source>
        <tissue>Liver</tissue>
    </source>
</reference>
<reference key="2">
    <citation type="journal article" date="2001" name="Genome Res.">
        <title>Towards a catalog of human genes and proteins: sequencing and analysis of 500 novel complete protein coding human cDNAs.</title>
        <authorList>
            <person name="Wiemann S."/>
            <person name="Weil B."/>
            <person name="Wellenreuther R."/>
            <person name="Gassenhuber J."/>
            <person name="Glassl S."/>
            <person name="Ansorge W."/>
            <person name="Boecher M."/>
            <person name="Bloecker H."/>
            <person name="Bauersachs S."/>
            <person name="Blum H."/>
            <person name="Lauber J."/>
            <person name="Duesterhoeft A."/>
            <person name="Beyer A."/>
            <person name="Koehrer K."/>
            <person name="Strack N."/>
            <person name="Mewes H.-W."/>
            <person name="Ottenwaelder B."/>
            <person name="Obermaier B."/>
            <person name="Tampe J."/>
            <person name="Heubner D."/>
            <person name="Wambutt R."/>
            <person name="Korn B."/>
            <person name="Klein M."/>
            <person name="Poustka A."/>
        </authorList>
    </citation>
    <scope>NUCLEOTIDE SEQUENCE [LARGE SCALE MRNA] (ISOFORM 1)</scope>
    <source>
        <tissue>Brain</tissue>
    </source>
</reference>
<reference key="3">
    <citation type="journal article" date="2003" name="Genome Res.">
        <title>The secreted protein discovery initiative (SPDI), a large-scale effort to identify novel human secreted and transmembrane proteins: a bioinformatics assessment.</title>
        <authorList>
            <person name="Clark H.F."/>
            <person name="Gurney A.L."/>
            <person name="Abaya E."/>
            <person name="Baker K."/>
            <person name="Baldwin D.T."/>
            <person name="Brush J."/>
            <person name="Chen J."/>
            <person name="Chow B."/>
            <person name="Chui C."/>
            <person name="Crowley C."/>
            <person name="Currell B."/>
            <person name="Deuel B."/>
            <person name="Dowd P."/>
            <person name="Eaton D."/>
            <person name="Foster J.S."/>
            <person name="Grimaldi C."/>
            <person name="Gu Q."/>
            <person name="Hass P.E."/>
            <person name="Heldens S."/>
            <person name="Huang A."/>
            <person name="Kim H.S."/>
            <person name="Klimowski L."/>
            <person name="Jin Y."/>
            <person name="Johnson S."/>
            <person name="Lee J."/>
            <person name="Lewis L."/>
            <person name="Liao D."/>
            <person name="Mark M.R."/>
            <person name="Robbie E."/>
            <person name="Sanchez C."/>
            <person name="Schoenfeld J."/>
            <person name="Seshagiri S."/>
            <person name="Simmons L."/>
            <person name="Singh J."/>
            <person name="Smith V."/>
            <person name="Stinson J."/>
            <person name="Vagts A."/>
            <person name="Vandlen R.L."/>
            <person name="Watanabe C."/>
            <person name="Wieand D."/>
            <person name="Woods K."/>
            <person name="Xie M.-H."/>
            <person name="Yansura D.G."/>
            <person name="Yi S."/>
            <person name="Yu G."/>
            <person name="Yuan J."/>
            <person name="Zhang M."/>
            <person name="Zhang Z."/>
            <person name="Goddard A.D."/>
            <person name="Wood W.I."/>
            <person name="Godowski P.J."/>
            <person name="Gray A.M."/>
        </authorList>
    </citation>
    <scope>NUCLEOTIDE SEQUENCE [LARGE SCALE MRNA] (ISOFORM 1)</scope>
</reference>
<reference key="4">
    <citation type="journal article" date="2004" name="Nat. Genet.">
        <title>Complete sequencing and characterization of 21,243 full-length human cDNAs.</title>
        <authorList>
            <person name="Ota T."/>
            <person name="Suzuki Y."/>
            <person name="Nishikawa T."/>
            <person name="Otsuki T."/>
            <person name="Sugiyama T."/>
            <person name="Irie R."/>
            <person name="Wakamatsu A."/>
            <person name="Hayashi K."/>
            <person name="Sato H."/>
            <person name="Nagai K."/>
            <person name="Kimura K."/>
            <person name="Makita H."/>
            <person name="Sekine M."/>
            <person name="Obayashi M."/>
            <person name="Nishi T."/>
            <person name="Shibahara T."/>
            <person name="Tanaka T."/>
            <person name="Ishii S."/>
            <person name="Yamamoto J."/>
            <person name="Saito K."/>
            <person name="Kawai Y."/>
            <person name="Isono Y."/>
            <person name="Nakamura Y."/>
            <person name="Nagahari K."/>
            <person name="Murakami K."/>
            <person name="Yasuda T."/>
            <person name="Iwayanagi T."/>
            <person name="Wagatsuma M."/>
            <person name="Shiratori A."/>
            <person name="Sudo H."/>
            <person name="Hosoiri T."/>
            <person name="Kaku Y."/>
            <person name="Kodaira H."/>
            <person name="Kondo H."/>
            <person name="Sugawara M."/>
            <person name="Takahashi M."/>
            <person name="Kanda K."/>
            <person name="Yokoi T."/>
            <person name="Furuya T."/>
            <person name="Kikkawa E."/>
            <person name="Omura Y."/>
            <person name="Abe K."/>
            <person name="Kamihara K."/>
            <person name="Katsuta N."/>
            <person name="Sato K."/>
            <person name="Tanikawa M."/>
            <person name="Yamazaki M."/>
            <person name="Ninomiya K."/>
            <person name="Ishibashi T."/>
            <person name="Yamashita H."/>
            <person name="Murakawa K."/>
            <person name="Fujimori K."/>
            <person name="Tanai H."/>
            <person name="Kimata M."/>
            <person name="Watanabe M."/>
            <person name="Hiraoka S."/>
            <person name="Chiba Y."/>
            <person name="Ishida S."/>
            <person name="Ono Y."/>
            <person name="Takiguchi S."/>
            <person name="Watanabe S."/>
            <person name="Yosida M."/>
            <person name="Hotuta T."/>
            <person name="Kusano J."/>
            <person name="Kanehori K."/>
            <person name="Takahashi-Fujii A."/>
            <person name="Hara H."/>
            <person name="Tanase T.-O."/>
            <person name="Nomura Y."/>
            <person name="Togiya S."/>
            <person name="Komai F."/>
            <person name="Hara R."/>
            <person name="Takeuchi K."/>
            <person name="Arita M."/>
            <person name="Imose N."/>
            <person name="Musashino K."/>
            <person name="Yuuki H."/>
            <person name="Oshima A."/>
            <person name="Sasaki N."/>
            <person name="Aotsuka S."/>
            <person name="Yoshikawa Y."/>
            <person name="Matsunawa H."/>
            <person name="Ichihara T."/>
            <person name="Shiohata N."/>
            <person name="Sano S."/>
            <person name="Moriya S."/>
            <person name="Momiyama H."/>
            <person name="Satoh N."/>
            <person name="Takami S."/>
            <person name="Terashima Y."/>
            <person name="Suzuki O."/>
            <person name="Nakagawa S."/>
            <person name="Senoh A."/>
            <person name="Mizoguchi H."/>
            <person name="Goto Y."/>
            <person name="Shimizu F."/>
            <person name="Wakebe H."/>
            <person name="Hishigaki H."/>
            <person name="Watanabe T."/>
            <person name="Sugiyama A."/>
            <person name="Takemoto M."/>
            <person name="Kawakami B."/>
            <person name="Yamazaki M."/>
            <person name="Watanabe K."/>
            <person name="Kumagai A."/>
            <person name="Itakura S."/>
            <person name="Fukuzumi Y."/>
            <person name="Fujimori Y."/>
            <person name="Komiyama M."/>
            <person name="Tashiro H."/>
            <person name="Tanigami A."/>
            <person name="Fujiwara T."/>
            <person name="Ono T."/>
            <person name="Yamada K."/>
            <person name="Fujii Y."/>
            <person name="Ozaki K."/>
            <person name="Hirao M."/>
            <person name="Ohmori Y."/>
            <person name="Kawabata A."/>
            <person name="Hikiji T."/>
            <person name="Kobatake N."/>
            <person name="Inagaki H."/>
            <person name="Ikema Y."/>
            <person name="Okamoto S."/>
            <person name="Okitani R."/>
            <person name="Kawakami T."/>
            <person name="Noguchi S."/>
            <person name="Itoh T."/>
            <person name="Shigeta K."/>
            <person name="Senba T."/>
            <person name="Matsumura K."/>
            <person name="Nakajima Y."/>
            <person name="Mizuno T."/>
            <person name="Morinaga M."/>
            <person name="Sasaki M."/>
            <person name="Togashi T."/>
            <person name="Oyama M."/>
            <person name="Hata H."/>
            <person name="Watanabe M."/>
            <person name="Komatsu T."/>
            <person name="Mizushima-Sugano J."/>
            <person name="Satoh T."/>
            <person name="Shirai Y."/>
            <person name="Takahashi Y."/>
            <person name="Nakagawa K."/>
            <person name="Okumura K."/>
            <person name="Nagase T."/>
            <person name="Nomura N."/>
            <person name="Kikuchi H."/>
            <person name="Masuho Y."/>
            <person name="Yamashita R."/>
            <person name="Nakai K."/>
            <person name="Yada T."/>
            <person name="Nakamura Y."/>
            <person name="Ohara O."/>
            <person name="Isogai T."/>
            <person name="Sugano S."/>
        </authorList>
    </citation>
    <scope>NUCLEOTIDE SEQUENCE [LARGE SCALE MRNA] (ISOFORM 3)</scope>
    <source>
        <tissue>Brain</tissue>
    </source>
</reference>
<reference key="5">
    <citation type="submission" date="2005-04" db="EMBL/GenBank/DDBJ databases">
        <authorList>
            <person name="Suzuki Y."/>
            <person name="Sugano S."/>
            <person name="Totoki Y."/>
            <person name="Toyoda A."/>
            <person name="Takeda T."/>
            <person name="Sakaki Y."/>
            <person name="Tanaka A."/>
            <person name="Yokoyama S."/>
        </authorList>
    </citation>
    <scope>NUCLEOTIDE SEQUENCE [LARGE SCALE MRNA] (ISOFORM 1)</scope>
    <source>
        <tissue>Liver</tissue>
    </source>
</reference>
<reference key="6">
    <citation type="journal article" date="2005" name="DNA Res.">
        <title>Signal sequence and keyword trap in silico for selection of full-length human cDNAs encoding secretion or membrane proteins from oligo-capped cDNA libraries.</title>
        <authorList>
            <person name="Otsuki T."/>
            <person name="Ota T."/>
            <person name="Nishikawa T."/>
            <person name="Hayashi K."/>
            <person name="Suzuki Y."/>
            <person name="Yamamoto J."/>
            <person name="Wakamatsu A."/>
            <person name="Kimura K."/>
            <person name="Sakamoto K."/>
            <person name="Hatano N."/>
            <person name="Kawai Y."/>
            <person name="Ishii S."/>
            <person name="Saito K."/>
            <person name="Kojima S."/>
            <person name="Sugiyama T."/>
            <person name="Ono T."/>
            <person name="Okano K."/>
            <person name="Yoshikawa Y."/>
            <person name="Aotsuka S."/>
            <person name="Sasaki N."/>
            <person name="Hattori A."/>
            <person name="Okumura K."/>
            <person name="Nagai K."/>
            <person name="Sugano S."/>
            <person name="Isogai T."/>
        </authorList>
    </citation>
    <scope>NUCLEOTIDE SEQUENCE [LARGE SCALE MRNA] (ISOFORM 1)</scope>
    <source>
        <tissue>Teratocarcinoma</tissue>
    </source>
</reference>
<reference key="7">
    <citation type="journal article" date="2007" name="BMC Genomics">
        <title>The full-ORF clone resource of the German cDNA consortium.</title>
        <authorList>
            <person name="Bechtel S."/>
            <person name="Rosenfelder H."/>
            <person name="Duda A."/>
            <person name="Schmidt C.P."/>
            <person name="Ernst U."/>
            <person name="Wellenreuther R."/>
            <person name="Mehrle A."/>
            <person name="Schuster C."/>
            <person name="Bahr A."/>
            <person name="Bloecker H."/>
            <person name="Heubner D."/>
            <person name="Hoerlein A."/>
            <person name="Michel G."/>
            <person name="Wedler H."/>
            <person name="Koehrer K."/>
            <person name="Ottenwaelder B."/>
            <person name="Poustka A."/>
            <person name="Wiemann S."/>
            <person name="Schupp I."/>
        </authorList>
    </citation>
    <scope>NUCLEOTIDE SEQUENCE [LARGE SCALE MRNA] (ISOFORM 2)</scope>
</reference>
<reference key="8">
    <citation type="journal article" date="2005" name="Nature">
        <title>Generation and annotation of the DNA sequences of human chromosomes 2 and 4.</title>
        <authorList>
            <person name="Hillier L.W."/>
            <person name="Graves T.A."/>
            <person name="Fulton R.S."/>
            <person name="Fulton L.A."/>
            <person name="Pepin K.H."/>
            <person name="Minx P."/>
            <person name="Wagner-McPherson C."/>
            <person name="Layman D."/>
            <person name="Wylie K."/>
            <person name="Sekhon M."/>
            <person name="Becker M.C."/>
            <person name="Fewell G.A."/>
            <person name="Delehaunty K.D."/>
            <person name="Miner T.L."/>
            <person name="Nash W.E."/>
            <person name="Kremitzki C."/>
            <person name="Oddy L."/>
            <person name="Du H."/>
            <person name="Sun H."/>
            <person name="Bradshaw-Cordum H."/>
            <person name="Ali J."/>
            <person name="Carter J."/>
            <person name="Cordes M."/>
            <person name="Harris A."/>
            <person name="Isak A."/>
            <person name="van Brunt A."/>
            <person name="Nguyen C."/>
            <person name="Du F."/>
            <person name="Courtney L."/>
            <person name="Kalicki J."/>
            <person name="Ozersky P."/>
            <person name="Abbott S."/>
            <person name="Armstrong J."/>
            <person name="Belter E.A."/>
            <person name="Caruso L."/>
            <person name="Cedroni M."/>
            <person name="Cotton M."/>
            <person name="Davidson T."/>
            <person name="Desai A."/>
            <person name="Elliott G."/>
            <person name="Erb T."/>
            <person name="Fronick C."/>
            <person name="Gaige T."/>
            <person name="Haakenson W."/>
            <person name="Haglund K."/>
            <person name="Holmes A."/>
            <person name="Harkins R."/>
            <person name="Kim K."/>
            <person name="Kruchowski S.S."/>
            <person name="Strong C.M."/>
            <person name="Grewal N."/>
            <person name="Goyea E."/>
            <person name="Hou S."/>
            <person name="Levy A."/>
            <person name="Martinka S."/>
            <person name="Mead K."/>
            <person name="McLellan M.D."/>
            <person name="Meyer R."/>
            <person name="Randall-Maher J."/>
            <person name="Tomlinson C."/>
            <person name="Dauphin-Kohlberg S."/>
            <person name="Kozlowicz-Reilly A."/>
            <person name="Shah N."/>
            <person name="Swearengen-Shahid S."/>
            <person name="Snider J."/>
            <person name="Strong J.T."/>
            <person name="Thompson J."/>
            <person name="Yoakum M."/>
            <person name="Leonard S."/>
            <person name="Pearman C."/>
            <person name="Trani L."/>
            <person name="Radionenko M."/>
            <person name="Waligorski J.E."/>
            <person name="Wang C."/>
            <person name="Rock S.M."/>
            <person name="Tin-Wollam A.-M."/>
            <person name="Maupin R."/>
            <person name="Latreille P."/>
            <person name="Wendl M.C."/>
            <person name="Yang S.-P."/>
            <person name="Pohl C."/>
            <person name="Wallis J.W."/>
            <person name="Spieth J."/>
            <person name="Bieri T.A."/>
            <person name="Berkowicz N."/>
            <person name="Nelson J.O."/>
            <person name="Osborne J."/>
            <person name="Ding L."/>
            <person name="Meyer R."/>
            <person name="Sabo A."/>
            <person name="Shotland Y."/>
            <person name="Sinha P."/>
            <person name="Wohldmann P.E."/>
            <person name="Cook L.L."/>
            <person name="Hickenbotham M.T."/>
            <person name="Eldred J."/>
            <person name="Williams D."/>
            <person name="Jones T.A."/>
            <person name="She X."/>
            <person name="Ciccarelli F.D."/>
            <person name="Izaurralde E."/>
            <person name="Taylor J."/>
            <person name="Schmutz J."/>
            <person name="Myers R.M."/>
            <person name="Cox D.R."/>
            <person name="Huang X."/>
            <person name="McPherson J.D."/>
            <person name="Mardis E.R."/>
            <person name="Clifton S.W."/>
            <person name="Warren W.C."/>
            <person name="Chinwalla A.T."/>
            <person name="Eddy S.R."/>
            <person name="Marra M.A."/>
            <person name="Ovcharenko I."/>
            <person name="Furey T.S."/>
            <person name="Miller W."/>
            <person name="Eichler E.E."/>
            <person name="Bork P."/>
            <person name="Suyama M."/>
            <person name="Torrents D."/>
            <person name="Waterston R.H."/>
            <person name="Wilson R.K."/>
        </authorList>
    </citation>
    <scope>NUCLEOTIDE SEQUENCE [LARGE SCALE GENOMIC DNA]</scope>
</reference>
<reference key="9">
    <citation type="submission" date="2005-09" db="EMBL/GenBank/DDBJ databases">
        <authorList>
            <person name="Mural R.J."/>
            <person name="Istrail S."/>
            <person name="Sutton G.G."/>
            <person name="Florea L."/>
            <person name="Halpern A.L."/>
            <person name="Mobarry C.M."/>
            <person name="Lippert R."/>
            <person name="Walenz B."/>
            <person name="Shatkay H."/>
            <person name="Dew I."/>
            <person name="Miller J.R."/>
            <person name="Flanigan M.J."/>
            <person name="Edwards N.J."/>
            <person name="Bolanos R."/>
            <person name="Fasulo D."/>
            <person name="Halldorsson B.V."/>
            <person name="Hannenhalli S."/>
            <person name="Turner R."/>
            <person name="Yooseph S."/>
            <person name="Lu F."/>
            <person name="Nusskern D.R."/>
            <person name="Shue B.C."/>
            <person name="Zheng X.H."/>
            <person name="Zhong F."/>
            <person name="Delcher A.L."/>
            <person name="Huson D.H."/>
            <person name="Kravitz S.A."/>
            <person name="Mouchard L."/>
            <person name="Reinert K."/>
            <person name="Remington K.A."/>
            <person name="Clark A.G."/>
            <person name="Waterman M.S."/>
            <person name="Eichler E.E."/>
            <person name="Adams M.D."/>
            <person name="Hunkapiller M.W."/>
            <person name="Myers E.W."/>
            <person name="Venter J.C."/>
        </authorList>
    </citation>
    <scope>NUCLEOTIDE SEQUENCE [LARGE SCALE GENOMIC DNA]</scope>
</reference>
<reference key="10">
    <citation type="journal article" date="2004" name="Genome Res.">
        <title>The status, quality, and expansion of the NIH full-length cDNA project: the Mammalian Gene Collection (MGC).</title>
        <authorList>
            <consortium name="The MGC Project Team"/>
        </authorList>
    </citation>
    <scope>NUCLEOTIDE SEQUENCE [LARGE SCALE MRNA] (ISOFORM 1)</scope>
    <source>
        <tissue>Muscle</tissue>
        <tissue>Uterus</tissue>
    </source>
</reference>
<reference key="11">
    <citation type="journal article" date="2003" name="Exp. Cell Res.">
        <title>VIPL, a VIP36-like membrane protein with a putative function in the export of glycoproteins from the endoplasmic reticulum.</title>
        <authorList>
            <person name="Neve E.P.A."/>
            <person name="Svensson K."/>
            <person name="Fuxe J."/>
            <person name="Pettersson R.F."/>
        </authorList>
    </citation>
    <scope>IDENTIFICATION</scope>
    <scope>FUNCTION</scope>
    <scope>SUBCELLULAR LOCATION</scope>
    <scope>TISSUE SPECIFICITY</scope>
    <scope>GLYCOSYLATION</scope>
</reference>
<reference key="12">
    <citation type="journal article" date="2011" name="BMC Syst. Biol.">
        <title>Initial characterization of the human central proteome.</title>
        <authorList>
            <person name="Burkard T.R."/>
            <person name="Planyavsky M."/>
            <person name="Kaupe I."/>
            <person name="Breitwieser F.P."/>
            <person name="Buerckstuemmer T."/>
            <person name="Bennett K.L."/>
            <person name="Superti-Furga G."/>
            <person name="Colinge J."/>
        </authorList>
    </citation>
    <scope>IDENTIFICATION BY MASS SPECTROMETRY [LARGE SCALE ANALYSIS]</scope>
</reference>
<reference key="13">
    <citation type="journal article" date="2015" name="Proteomics">
        <title>N-terminome analysis of the human mitochondrial proteome.</title>
        <authorList>
            <person name="Vaca Jacome A.S."/>
            <person name="Rabilloud T."/>
            <person name="Schaeffer-Reiss C."/>
            <person name="Rompais M."/>
            <person name="Ayoub D."/>
            <person name="Lane L."/>
            <person name="Bairoch A."/>
            <person name="Van Dorsselaer A."/>
            <person name="Carapito C."/>
        </authorList>
    </citation>
    <scope>IDENTIFICATION BY MASS SPECTROMETRY [LARGE SCALE ANALYSIS]</scope>
</reference>
<reference key="14">
    <citation type="journal article" date="2016" name="J. Med. Genet.">
        <title>Homozygous missense mutation in the LMAN2L gene segregates with intellectual disability in a large consanguineous Pakistani family.</title>
        <authorList>
            <person name="Rafiullah R."/>
            <person name="Aslamkhan M."/>
            <person name="Paramasivam N."/>
            <person name="Thiel C."/>
            <person name="Mustafa G."/>
            <person name="Wiemann S."/>
            <person name="Schlesner M."/>
            <person name="Wade R.C."/>
            <person name="Rappold G.A."/>
            <person name="Berkel S."/>
        </authorList>
    </citation>
    <scope>INVOLVEMENT IN MRT52</scope>
    <scope>VARIANT MRT52 GLN-53</scope>
    <scope>CHARACTERIZATION OF VARIANT MRT52 GLN-53</scope>
</reference>
<reference key="15">
    <citation type="journal article" date="2019" name="Ann. Clin. Transl. Neurol.">
        <title>Dominant LMAN2L mutation causes intellectual disability with remitting epilepsy.</title>
        <authorList>
            <person name="Alkhater R.A."/>
            <person name="Wang P."/>
            <person name="Ruggieri A."/>
            <person name="Israelian L."/>
            <person name="Walker S."/>
            <person name="Scherer S.W."/>
            <person name="Smith M.L."/>
            <person name="Minassian B.A."/>
        </authorList>
    </citation>
    <scope>INVOLVEMENT IN MRD69</scope>
</reference>
<accession>Q9H0V9</accession>
<accession>B4DSH3</accession>
<accession>D3DXH6</accession>
<accession>Q53GV3</accession>
<accession>Q53S67</accession>
<accession>Q63HN6</accession>
<accession>Q8NBQ6</accession>
<accession>Q9BQ14</accession>
<proteinExistence type="evidence at protein level"/>
<keyword id="KW-0025">Alternative splicing</keyword>
<keyword id="KW-0225">Disease variant</keyword>
<keyword id="KW-1015">Disulfide bond</keyword>
<keyword id="KW-0256">Endoplasmic reticulum</keyword>
<keyword id="KW-0325">Glycoprotein</keyword>
<keyword id="KW-0333">Golgi apparatus</keyword>
<keyword id="KW-0991">Intellectual disability</keyword>
<keyword id="KW-0430">Lectin</keyword>
<keyword id="KW-0472">Membrane</keyword>
<keyword id="KW-0479">Metal-binding</keyword>
<keyword id="KW-1267">Proteomics identification</keyword>
<keyword id="KW-1185">Reference proteome</keyword>
<keyword id="KW-0732">Signal</keyword>
<keyword id="KW-0812">Transmembrane</keyword>
<keyword id="KW-1133">Transmembrane helix</keyword>